<dbReference type="EMBL" id="CR380956">
    <property type="protein sequence ID" value="CAG60808.1"/>
    <property type="molecule type" value="Genomic_DNA"/>
</dbReference>
<dbReference type="RefSeq" id="XP_447859.1">
    <property type="nucleotide sequence ID" value="XM_447859.1"/>
</dbReference>
<dbReference type="SMR" id="Q6FPI5"/>
<dbReference type="FunCoup" id="Q6FPI5">
    <property type="interactions" value="247"/>
</dbReference>
<dbReference type="STRING" id="284593.Q6FPI5"/>
<dbReference type="GlyCosmos" id="Q6FPI5">
    <property type="glycosylation" value="14 sites, No reported glycans"/>
</dbReference>
<dbReference type="EnsemblFungi" id="CAGL0J03564g-T">
    <property type="protein sequence ID" value="CAGL0J03564g-T-p1"/>
    <property type="gene ID" value="CAGL0J03564g"/>
</dbReference>
<dbReference type="KEGG" id="cgr:2889700"/>
<dbReference type="CGD" id="CAL0133628">
    <property type="gene designation" value="CAGL0J03564g"/>
</dbReference>
<dbReference type="VEuPathDB" id="FungiDB:CAGL0J03564g"/>
<dbReference type="eggNOG" id="KOG0771">
    <property type="taxonomic scope" value="Eukaryota"/>
</dbReference>
<dbReference type="HOGENOM" id="CLU_294562_0_0_1"/>
<dbReference type="InParanoid" id="Q6FPI5"/>
<dbReference type="Proteomes" id="UP000002428">
    <property type="component" value="Chromosome J"/>
</dbReference>
<dbReference type="GO" id="GO:0005789">
    <property type="term" value="C:endoplasmic reticulum membrane"/>
    <property type="evidence" value="ECO:0007669"/>
    <property type="project" value="UniProtKB-SubCell"/>
</dbReference>
<dbReference type="GO" id="GO:0000139">
    <property type="term" value="C:Golgi membrane"/>
    <property type="evidence" value="ECO:0007669"/>
    <property type="project" value="UniProtKB-SubCell"/>
</dbReference>
<dbReference type="GO" id="GO:0005096">
    <property type="term" value="F:GTPase activator activity"/>
    <property type="evidence" value="ECO:0007669"/>
    <property type="project" value="UniProtKB-KW"/>
</dbReference>
<dbReference type="GO" id="GO:0005085">
    <property type="term" value="F:guanyl-nucleotide exchange factor activity"/>
    <property type="evidence" value="ECO:0007669"/>
    <property type="project" value="InterPro"/>
</dbReference>
<dbReference type="GO" id="GO:0006888">
    <property type="term" value="P:endoplasmic reticulum to Golgi vesicle-mediated transport"/>
    <property type="evidence" value="ECO:0007669"/>
    <property type="project" value="TreeGrafter"/>
</dbReference>
<dbReference type="GO" id="GO:0015031">
    <property type="term" value="P:protein transport"/>
    <property type="evidence" value="ECO:0007669"/>
    <property type="project" value="UniProtKB-KW"/>
</dbReference>
<dbReference type="GO" id="GO:0003400">
    <property type="term" value="P:regulation of COPII vesicle coating"/>
    <property type="evidence" value="ECO:0007669"/>
    <property type="project" value="TreeGrafter"/>
</dbReference>
<dbReference type="Gene3D" id="2.130.10.10">
    <property type="entry name" value="YVTN repeat-like/Quinoprotein amine dehydrogenase"/>
    <property type="match status" value="1"/>
</dbReference>
<dbReference type="InterPro" id="IPR045260">
    <property type="entry name" value="Sec12-like"/>
</dbReference>
<dbReference type="InterPro" id="IPR015943">
    <property type="entry name" value="WD40/YVTN_repeat-like_dom_sf"/>
</dbReference>
<dbReference type="InterPro" id="IPR036322">
    <property type="entry name" value="WD40_repeat_dom_sf"/>
</dbReference>
<dbReference type="InterPro" id="IPR001680">
    <property type="entry name" value="WD40_rpt"/>
</dbReference>
<dbReference type="PANTHER" id="PTHR23284">
    <property type="entry name" value="PROLACTIN REGULATORY ELEMENT BINDING PROTEIN"/>
    <property type="match status" value="1"/>
</dbReference>
<dbReference type="PANTHER" id="PTHR23284:SF0">
    <property type="entry name" value="PROLACTIN REGULATORY ELEMENT-BINDING PROTEIN"/>
    <property type="match status" value="1"/>
</dbReference>
<dbReference type="Pfam" id="PF00400">
    <property type="entry name" value="WD40"/>
    <property type="match status" value="1"/>
</dbReference>
<dbReference type="SMART" id="SM00320">
    <property type="entry name" value="WD40"/>
    <property type="match status" value="2"/>
</dbReference>
<dbReference type="SUPFAM" id="SSF50978">
    <property type="entry name" value="WD40 repeat-like"/>
    <property type="match status" value="1"/>
</dbReference>
<dbReference type="PROSITE" id="PS50082">
    <property type="entry name" value="WD_REPEATS_2"/>
    <property type="match status" value="1"/>
</dbReference>
<dbReference type="PROSITE" id="PS50294">
    <property type="entry name" value="WD_REPEATS_REGION"/>
    <property type="match status" value="1"/>
</dbReference>
<sequence length="1029" mass="112470">MVFDSEYDLGYPVYGAQFLSDGMLLVAGGGGVGVMIPNKLTALRVNFEKKKVLKRYREITLDSQDDSPSNLGVAQNMILMGCNEGYDKISSTGENHHIRKFVFENDHLKFIGAIDFDGSTDPEVYTKLICMSKDGTIAAIASSKLPTVIRIIDPIDLTEKYEIETGRDVRDIHFSPDGKLLVYITATSLEVVSVVTGRFLFRKTDFNKATDLARVKFINDDDFVLASGFKDKAGIALTTFRIRNTNPTILSSKKVFKDYKKITAMDVDPKGQLIALTTDDNSLALLSVKKLNVIKLFKQVHKDTITRVTVSPGGQYVATGSTDKTVHIFKISPDAMGGSNLWKSLLRFLFNVMKLAVVVIWAHLFYKYDLHHKLYDVTKVQLEKRSIEFPSFLDGILGTTTTRSTIIEGDIVSVVTDTAPALTSSVFSEDNKEYAKVEETTPSNSWSSVSESYWPSEVSNDIESVQENFDDIENKILENEDVVMKNDAIETEDESVGFDIDDTIKPIAPIDIDLELDDPLASTSVDTSEVLSSQVPVQLETLSGQSEIIDDKPEHLDEEVSEGFLGDHSKANLETEIENASTSISIEESTNSHSTFIESSSSLEEGRNTTSESSREISSETSIIKEDMLYPTENVSEQSATDKVNKNQSIDKIDVSSSSSIPTSSEGSSNSIVGDEAQMHISSLSSIETELSSSSIMINEESTIRNADSVVDENHSESKLPTEAKTSIVGSIDNENIDSTELNNLEEAVKTSSNESSLSQVTEELVKNNERVSNQSLSTVSTEHTEMKESSNLTEKKPESNSPESNLSESSLQTHDFSQISDTERNIVSSSAFVTDLPSEEASVNPGNTEGTIVNASLVDSQSSNSSVKTVETNVSQDEQTSQNETLSVGAATIDVIQGSYTSVSDSLDGMNNEEVGNKVHIEDVSNTLEIDSSASALSEQGDNQFSDSTPEVVNVINEFTTTPENETSSPLASSSTTFMTESPSPIAVANEVIENIQQDEQVAQQMEDTNSGSSNFQDTQHNVINDEL</sequence>
<reference key="1">
    <citation type="journal article" date="2004" name="Nature">
        <title>Genome evolution in yeasts.</title>
        <authorList>
            <person name="Dujon B."/>
            <person name="Sherman D."/>
            <person name="Fischer G."/>
            <person name="Durrens P."/>
            <person name="Casaregola S."/>
            <person name="Lafontaine I."/>
            <person name="de Montigny J."/>
            <person name="Marck C."/>
            <person name="Neuveglise C."/>
            <person name="Talla E."/>
            <person name="Goffard N."/>
            <person name="Frangeul L."/>
            <person name="Aigle M."/>
            <person name="Anthouard V."/>
            <person name="Babour A."/>
            <person name="Barbe V."/>
            <person name="Barnay S."/>
            <person name="Blanchin S."/>
            <person name="Beckerich J.-M."/>
            <person name="Beyne E."/>
            <person name="Bleykasten C."/>
            <person name="Boisrame A."/>
            <person name="Boyer J."/>
            <person name="Cattolico L."/>
            <person name="Confanioleri F."/>
            <person name="de Daruvar A."/>
            <person name="Despons L."/>
            <person name="Fabre E."/>
            <person name="Fairhead C."/>
            <person name="Ferry-Dumazet H."/>
            <person name="Groppi A."/>
            <person name="Hantraye F."/>
            <person name="Hennequin C."/>
            <person name="Jauniaux N."/>
            <person name="Joyet P."/>
            <person name="Kachouri R."/>
            <person name="Kerrest A."/>
            <person name="Koszul R."/>
            <person name="Lemaire M."/>
            <person name="Lesur I."/>
            <person name="Ma L."/>
            <person name="Muller H."/>
            <person name="Nicaud J.-M."/>
            <person name="Nikolski M."/>
            <person name="Oztas S."/>
            <person name="Ozier-Kalogeropoulos O."/>
            <person name="Pellenz S."/>
            <person name="Potier S."/>
            <person name="Richard G.-F."/>
            <person name="Straub M.-L."/>
            <person name="Suleau A."/>
            <person name="Swennen D."/>
            <person name="Tekaia F."/>
            <person name="Wesolowski-Louvel M."/>
            <person name="Westhof E."/>
            <person name="Wirth B."/>
            <person name="Zeniou-Meyer M."/>
            <person name="Zivanovic Y."/>
            <person name="Bolotin-Fukuhara M."/>
            <person name="Thierry A."/>
            <person name="Bouchier C."/>
            <person name="Caudron B."/>
            <person name="Scarpelli C."/>
            <person name="Gaillardin C."/>
            <person name="Weissenbach J."/>
            <person name="Wincker P."/>
            <person name="Souciet J.-L."/>
        </authorList>
    </citation>
    <scope>NUCLEOTIDE SEQUENCE [LARGE SCALE GENOMIC DNA]</scope>
    <source>
        <strain>ATCC 2001 / BCRC 20586 / JCM 3761 / NBRC 0622 / NRRL Y-65 / CBS 138</strain>
    </source>
</reference>
<keyword id="KW-0256">Endoplasmic reticulum</keyword>
<keyword id="KW-0931">ER-Golgi transport</keyword>
<keyword id="KW-0325">Glycoprotein</keyword>
<keyword id="KW-0333">Golgi apparatus</keyword>
<keyword id="KW-0343">GTPase activation</keyword>
<keyword id="KW-0472">Membrane</keyword>
<keyword id="KW-0653">Protein transport</keyword>
<keyword id="KW-1185">Reference proteome</keyword>
<keyword id="KW-0677">Repeat</keyword>
<keyword id="KW-0735">Signal-anchor</keyword>
<keyword id="KW-0812">Transmembrane</keyword>
<keyword id="KW-1133">Transmembrane helix</keyword>
<keyword id="KW-0813">Transport</keyword>
<keyword id="KW-0853">WD repeat</keyword>
<name>SED4_CANGA</name>
<protein>
    <recommendedName>
        <fullName>Putative guanine nucleotide-exchange factor SED4</fullName>
    </recommendedName>
</protein>
<gene>
    <name type="primary">SED4</name>
    <name type="ordered locus">CAGL0J03564g</name>
</gene>
<comment type="function">
    <text evidence="1">Putative guanine nucleotide-exchange factor (GEF) involved in the formation or budding of transport vesicles from the ER. Positive regulator of SAR1 probably through inhibition of the GTPase activation by SEC23 (By similarity).</text>
</comment>
<comment type="subcellular location">
    <subcellularLocation>
        <location evidence="1">Endoplasmic reticulum membrane</location>
        <topology evidence="1">Single-pass type II membrane protein</topology>
    </subcellularLocation>
    <subcellularLocation>
        <location evidence="1">Golgi apparatus membrane</location>
        <topology evidence="1">Single-pass type II membrane protein</topology>
    </subcellularLocation>
    <text evidence="1">In the process of transport, SED4 itself may migrate to the Golgi apparatus and function in subsequent transport events.</text>
</comment>
<comment type="similarity">
    <text evidence="4">Belongs to the WD repeat SEC12 family.</text>
</comment>
<proteinExistence type="inferred from homology"/>
<evidence type="ECO:0000250" key="1"/>
<evidence type="ECO:0000255" key="2"/>
<evidence type="ECO:0000256" key="3">
    <source>
        <dbReference type="SAM" id="MobiDB-lite"/>
    </source>
</evidence>
<evidence type="ECO:0000305" key="4"/>
<feature type="chain" id="PRO_0000295590" description="Putative guanine nucleotide-exchange factor SED4">
    <location>
        <begin position="1"/>
        <end position="1029"/>
    </location>
</feature>
<feature type="topological domain" description="Cytoplasmic" evidence="2">
    <location>
        <begin position="1"/>
        <end position="344"/>
    </location>
</feature>
<feature type="transmembrane region" description="Helical; Signal-anchor for type II membrane protein">
    <location>
        <begin position="345"/>
        <end position="365"/>
    </location>
</feature>
<feature type="topological domain" description="Lumenal" evidence="2">
    <location>
        <begin position="366"/>
        <end position="1029"/>
    </location>
</feature>
<feature type="repeat" description="WD 1">
    <location>
        <begin position="257"/>
        <end position="296"/>
    </location>
</feature>
<feature type="repeat" description="WD 2">
    <location>
        <begin position="300"/>
        <end position="339"/>
    </location>
</feature>
<feature type="region of interest" description="Disordered" evidence="3">
    <location>
        <begin position="579"/>
        <end position="673"/>
    </location>
</feature>
<feature type="region of interest" description="Disordered" evidence="3">
    <location>
        <begin position="710"/>
        <end position="732"/>
    </location>
</feature>
<feature type="region of interest" description="Disordered" evidence="3">
    <location>
        <begin position="747"/>
        <end position="821"/>
    </location>
</feature>
<feature type="region of interest" description="Disordered" evidence="3">
    <location>
        <begin position="858"/>
        <end position="886"/>
    </location>
</feature>
<feature type="region of interest" description="Disordered" evidence="3">
    <location>
        <begin position="963"/>
        <end position="982"/>
    </location>
</feature>
<feature type="region of interest" description="Disordered" evidence="3">
    <location>
        <begin position="1003"/>
        <end position="1029"/>
    </location>
</feature>
<feature type="short sequence motif" description="Prevents secretion from ER" evidence="2">
    <location>
        <begin position="1026"/>
        <end position="1029"/>
    </location>
</feature>
<feature type="compositionally biased region" description="Low complexity" evidence="3">
    <location>
        <begin position="579"/>
        <end position="592"/>
    </location>
</feature>
<feature type="compositionally biased region" description="Polar residues" evidence="3">
    <location>
        <begin position="593"/>
        <end position="603"/>
    </location>
</feature>
<feature type="compositionally biased region" description="Basic and acidic residues" evidence="3">
    <location>
        <begin position="613"/>
        <end position="628"/>
    </location>
</feature>
<feature type="compositionally biased region" description="Polar residues" evidence="3">
    <location>
        <begin position="633"/>
        <end position="642"/>
    </location>
</feature>
<feature type="compositionally biased region" description="Basic and acidic residues" evidence="3">
    <location>
        <begin position="643"/>
        <end position="654"/>
    </location>
</feature>
<feature type="compositionally biased region" description="Low complexity" evidence="3">
    <location>
        <begin position="655"/>
        <end position="672"/>
    </location>
</feature>
<feature type="compositionally biased region" description="Basic and acidic residues" evidence="3">
    <location>
        <begin position="712"/>
        <end position="722"/>
    </location>
</feature>
<feature type="compositionally biased region" description="Polar residues" evidence="3">
    <location>
        <begin position="750"/>
        <end position="762"/>
    </location>
</feature>
<feature type="compositionally biased region" description="Polar residues" evidence="3">
    <location>
        <begin position="771"/>
        <end position="782"/>
    </location>
</feature>
<feature type="compositionally biased region" description="Basic and acidic residues" evidence="3">
    <location>
        <begin position="783"/>
        <end position="799"/>
    </location>
</feature>
<feature type="compositionally biased region" description="Low complexity" evidence="3">
    <location>
        <begin position="800"/>
        <end position="812"/>
    </location>
</feature>
<feature type="compositionally biased region" description="Low complexity" evidence="3">
    <location>
        <begin position="858"/>
        <end position="867"/>
    </location>
</feature>
<feature type="compositionally biased region" description="Polar residues" evidence="3">
    <location>
        <begin position="868"/>
        <end position="886"/>
    </location>
</feature>
<feature type="glycosylation site" description="N-linked (GlcNAc...) asparagine" evidence="2">
    <location>
        <position position="579"/>
    </location>
</feature>
<feature type="glycosylation site" description="N-linked (GlcNAc...) asparagine" evidence="2">
    <location>
        <position position="608"/>
    </location>
</feature>
<feature type="glycosylation site" description="N-linked (GlcNAc...) asparagine" evidence="2">
    <location>
        <position position="634"/>
    </location>
</feature>
<feature type="glycosylation site" description="N-linked (GlcNAc...) asparagine" evidence="2">
    <location>
        <position position="647"/>
    </location>
</feature>
<feature type="glycosylation site" description="N-linked (GlcNAc...) asparagine" evidence="2">
    <location>
        <position position="714"/>
    </location>
</feature>
<feature type="glycosylation site" description="N-linked (GlcNAc...) asparagine" evidence="2">
    <location>
        <position position="754"/>
    </location>
</feature>
<feature type="glycosylation site" description="N-linked (GlcNAc...) asparagine" evidence="2">
    <location>
        <position position="774"/>
    </location>
</feature>
<feature type="glycosylation site" description="N-linked (GlcNAc...) asparagine" evidence="2">
    <location>
        <position position="792"/>
    </location>
</feature>
<feature type="glycosylation site" description="N-linked (GlcNAc...) asparagine" evidence="2">
    <location>
        <position position="806"/>
    </location>
</feature>
<feature type="glycosylation site" description="N-linked (GlcNAc...) asparagine" evidence="2">
    <location>
        <position position="855"/>
    </location>
</feature>
<feature type="glycosylation site" description="N-linked (GlcNAc...) asparagine" evidence="2">
    <location>
        <position position="865"/>
    </location>
</feature>
<feature type="glycosylation site" description="N-linked (GlcNAc...) asparagine" evidence="2">
    <location>
        <position position="874"/>
    </location>
</feature>
<feature type="glycosylation site" description="N-linked (GlcNAc...) asparagine" evidence="2">
    <location>
        <position position="884"/>
    </location>
</feature>
<feature type="glycosylation site" description="N-linked (GlcNAc...) asparagine" evidence="2">
    <location>
        <position position="966"/>
    </location>
</feature>
<organism>
    <name type="scientific">Candida glabrata (strain ATCC 2001 / BCRC 20586 / JCM 3761 / NBRC 0622 / NRRL Y-65 / CBS 138)</name>
    <name type="common">Yeast</name>
    <name type="synonym">Nakaseomyces glabratus</name>
    <dbReference type="NCBI Taxonomy" id="284593"/>
    <lineage>
        <taxon>Eukaryota</taxon>
        <taxon>Fungi</taxon>
        <taxon>Dikarya</taxon>
        <taxon>Ascomycota</taxon>
        <taxon>Saccharomycotina</taxon>
        <taxon>Saccharomycetes</taxon>
        <taxon>Saccharomycetales</taxon>
        <taxon>Saccharomycetaceae</taxon>
        <taxon>Nakaseomyces</taxon>
    </lineage>
</organism>
<accession>Q6FPI5</accession>